<reference key="1">
    <citation type="journal article" date="1987" name="J. Gen. Virol.">
        <title>The complete nucleotide sequence of tobacco rattle virus RNA-1.</title>
        <authorList>
            <person name="Hamilton W.D.O."/>
            <person name="Boccara M."/>
            <person name="Robinson D.J."/>
            <person name="Baulcombe D.C."/>
        </authorList>
    </citation>
    <scope>NUCLEOTIDE SEQUENCE [GENOMIC RNA]</scope>
</reference>
<reference key="2">
    <citation type="journal article" date="1986" name="EMBO J.">
        <title>The organisation and interviral homologies of genes at the 3' end of tobacco rattle virus RNA1.</title>
        <authorList>
            <person name="Boccara M."/>
            <person name="Hamilton W.D.O."/>
            <person name="Baulcombe D.C."/>
        </authorList>
    </citation>
    <scope>PARTIAL NUCLEOTIDE SEQUENCE</scope>
</reference>
<keyword id="KW-0067">ATP-binding</keyword>
<keyword id="KW-0175">Coiled coil</keyword>
<keyword id="KW-0347">Helicase</keyword>
<keyword id="KW-0378">Hydrolase</keyword>
<keyword id="KW-0489">Methyltransferase</keyword>
<keyword id="KW-0547">Nucleotide-binding</keyword>
<keyword id="KW-0548">Nucleotidyltransferase</keyword>
<keyword id="KW-0694">RNA-binding</keyword>
<keyword id="KW-0696">RNA-directed RNA polymerase</keyword>
<keyword id="KW-0808">Transferase</keyword>
<keyword id="KW-0693">Viral RNA replication</keyword>
<protein>
    <recommendedName>
        <fullName>Replicase large subunit</fullName>
        <ecNumber>2.1.1.-</ecNumber>
        <ecNumber>2.7.7.-</ecNumber>
        <ecNumber>2.7.7.48</ecNumber>
        <ecNumber>3.6.4.13</ecNumber>
    </recommendedName>
    <alternativeName>
        <fullName>194 kDa protein</fullName>
    </alternativeName>
    <alternativeName>
        <fullName>RNA-directed RNA polymerase</fullName>
    </alternativeName>
    <component>
        <recommendedName>
            <fullName>Replicase small subunit</fullName>
            <ecNumber>2.1.1.-</ecNumber>
            <ecNumber>2.7.7.-</ecNumber>
            <ecNumber>3.6.4.13</ecNumber>
        </recommendedName>
        <alternativeName>
            <fullName>134 kDa protein</fullName>
        </alternativeName>
        <alternativeName>
            <fullName>Methyltransferase/RNA helicase</fullName>
        </alternativeName>
    </component>
</protein>
<evidence type="ECO:0000250" key="1"/>
<evidence type="ECO:0000255" key="2"/>
<evidence type="ECO:0000255" key="3">
    <source>
        <dbReference type="PROSITE-ProRule" id="PRU00539"/>
    </source>
</evidence>
<evidence type="ECO:0000255" key="4">
    <source>
        <dbReference type="PROSITE-ProRule" id="PRU01079"/>
    </source>
</evidence>
<evidence type="ECO:0000305" key="5"/>
<name>194K_TRVSY</name>
<accession>P05080</accession>
<dbReference type="EC" id="2.1.1.-"/>
<dbReference type="EC" id="2.7.7.-"/>
<dbReference type="EC" id="2.7.7.48"/>
<dbReference type="EC" id="3.6.4.13"/>
<dbReference type="EMBL" id="X06172">
    <property type="protein sequence ID" value="CAA29537.1"/>
    <property type="molecule type" value="Genomic_RNA"/>
</dbReference>
<dbReference type="EMBL" id="D00155">
    <property type="protein sequence ID" value="BAA00110.1"/>
    <property type="molecule type" value="Genomic_RNA"/>
</dbReference>
<dbReference type="PIR" id="S01865">
    <property type="entry name" value="S01865"/>
</dbReference>
<dbReference type="GO" id="GO:0005524">
    <property type="term" value="F:ATP binding"/>
    <property type="evidence" value="ECO:0007669"/>
    <property type="project" value="UniProtKB-KW"/>
</dbReference>
<dbReference type="GO" id="GO:0016887">
    <property type="term" value="F:ATP hydrolysis activity"/>
    <property type="evidence" value="ECO:0007669"/>
    <property type="project" value="RHEA"/>
</dbReference>
<dbReference type="GO" id="GO:0008174">
    <property type="term" value="F:mRNA methyltransferase activity"/>
    <property type="evidence" value="ECO:0007669"/>
    <property type="project" value="InterPro"/>
</dbReference>
<dbReference type="GO" id="GO:0003723">
    <property type="term" value="F:RNA binding"/>
    <property type="evidence" value="ECO:0007669"/>
    <property type="project" value="UniProtKB-KW"/>
</dbReference>
<dbReference type="GO" id="GO:0003724">
    <property type="term" value="F:RNA helicase activity"/>
    <property type="evidence" value="ECO:0007669"/>
    <property type="project" value="UniProtKB-EC"/>
</dbReference>
<dbReference type="GO" id="GO:0003968">
    <property type="term" value="F:RNA-directed RNA polymerase activity"/>
    <property type="evidence" value="ECO:0007669"/>
    <property type="project" value="UniProtKB-KW"/>
</dbReference>
<dbReference type="GO" id="GO:0006351">
    <property type="term" value="P:DNA-templated transcription"/>
    <property type="evidence" value="ECO:0007669"/>
    <property type="project" value="InterPro"/>
</dbReference>
<dbReference type="GO" id="GO:0032259">
    <property type="term" value="P:methylation"/>
    <property type="evidence" value="ECO:0007669"/>
    <property type="project" value="UniProtKB-KW"/>
</dbReference>
<dbReference type="GO" id="GO:0016556">
    <property type="term" value="P:mRNA modification"/>
    <property type="evidence" value="ECO:0007669"/>
    <property type="project" value="InterPro"/>
</dbReference>
<dbReference type="GO" id="GO:0006396">
    <property type="term" value="P:RNA processing"/>
    <property type="evidence" value="ECO:0007669"/>
    <property type="project" value="InterPro"/>
</dbReference>
<dbReference type="GO" id="GO:0039694">
    <property type="term" value="P:viral RNA genome replication"/>
    <property type="evidence" value="ECO:0007669"/>
    <property type="project" value="InterPro"/>
</dbReference>
<dbReference type="CDD" id="cd23251">
    <property type="entry name" value="Virgaviridae_RdRp"/>
    <property type="match status" value="1"/>
</dbReference>
<dbReference type="Gene3D" id="3.40.50.300">
    <property type="entry name" value="P-loop containing nucleotide triphosphate hydrolases"/>
    <property type="match status" value="2"/>
</dbReference>
<dbReference type="InterPro" id="IPR027351">
    <property type="entry name" value="(+)RNA_virus_helicase_core_dom"/>
</dbReference>
<dbReference type="InterPro" id="IPR002588">
    <property type="entry name" value="Alphavirus-like_MT_dom"/>
</dbReference>
<dbReference type="InterPro" id="IPR043502">
    <property type="entry name" value="DNA/RNA_pol_sf"/>
</dbReference>
<dbReference type="InterPro" id="IPR027417">
    <property type="entry name" value="P-loop_NTPase"/>
</dbReference>
<dbReference type="InterPro" id="IPR001788">
    <property type="entry name" value="RNA-dep_RNA_pol_alsuvir"/>
</dbReference>
<dbReference type="InterPro" id="IPR007094">
    <property type="entry name" value="RNA-dir_pol_PSvirus"/>
</dbReference>
<dbReference type="InterPro" id="IPR047310">
    <property type="entry name" value="Virgaviridae_RdRp"/>
</dbReference>
<dbReference type="Pfam" id="PF00978">
    <property type="entry name" value="RdRP_2"/>
    <property type="match status" value="1"/>
</dbReference>
<dbReference type="Pfam" id="PF01443">
    <property type="entry name" value="Viral_helicase1"/>
    <property type="match status" value="1"/>
</dbReference>
<dbReference type="Pfam" id="PF01660">
    <property type="entry name" value="Vmethyltransf"/>
    <property type="match status" value="1"/>
</dbReference>
<dbReference type="SUPFAM" id="SSF56672">
    <property type="entry name" value="DNA/RNA polymerases"/>
    <property type="match status" value="1"/>
</dbReference>
<dbReference type="SUPFAM" id="SSF52540">
    <property type="entry name" value="P-loop containing nucleoside triphosphate hydrolases"/>
    <property type="match status" value="1"/>
</dbReference>
<dbReference type="PROSITE" id="PS51743">
    <property type="entry name" value="ALPHAVIRUS_MT"/>
    <property type="match status" value="1"/>
</dbReference>
<dbReference type="PROSITE" id="PS51657">
    <property type="entry name" value="PSRV_HELICASE"/>
    <property type="match status" value="1"/>
</dbReference>
<dbReference type="PROSITE" id="PS50507">
    <property type="entry name" value="RDRP_SSRNA_POS"/>
    <property type="match status" value="1"/>
</dbReference>
<proteinExistence type="inferred from homology"/>
<organismHost>
    <name type="scientific">Beta vulgaris</name>
    <name type="common">Sugar beet</name>
    <dbReference type="NCBI Taxonomy" id="161934"/>
</organismHost>
<organismHost>
    <name type="scientific">Capsicum annuum</name>
    <name type="common">Capsicum pepper</name>
    <dbReference type="NCBI Taxonomy" id="4072"/>
</organismHost>
<organismHost>
    <name type="scientific">Hyacinthus</name>
    <dbReference type="NCBI Taxonomy" id="82024"/>
</organismHost>
<organismHost>
    <name type="scientific">Narcissus pseudonarcissus</name>
    <name type="common">Daffodil</name>
    <dbReference type="NCBI Taxonomy" id="39639"/>
</organismHost>
<organismHost>
    <name type="scientific">Nicotiana tabacum</name>
    <name type="common">Common tobacco</name>
    <dbReference type="NCBI Taxonomy" id="4097"/>
</organismHost>
<organismHost>
    <name type="scientific">Solanum tuberosum</name>
    <name type="common">Potato</name>
    <dbReference type="NCBI Taxonomy" id="4113"/>
</organismHost>
<organismHost>
    <name type="scientific">Spinacia oleracea</name>
    <name type="common">Spinach</name>
    <dbReference type="NCBI Taxonomy" id="3562"/>
</organismHost>
<organismHost>
    <name type="scientific">Stellaria media</name>
    <name type="common">Common chickweed</name>
    <name type="synonym">Alsine media</name>
    <dbReference type="NCBI Taxonomy" id="13274"/>
</organismHost>
<organismHost>
    <name type="scientific">Tulipa</name>
    <dbReference type="NCBI Taxonomy" id="13305"/>
</organismHost>
<organismHost>
    <name type="scientific">Viola arvensis</name>
    <name type="common">European field pansy</name>
    <name type="synonym">Field violet</name>
    <dbReference type="NCBI Taxonomy" id="97415"/>
</organismHost>
<organism>
    <name type="scientific">Tobacco rattle virus (strain SYM)</name>
    <dbReference type="NCBI Taxonomy" id="12298"/>
    <lineage>
        <taxon>Viruses</taxon>
        <taxon>Riboviria</taxon>
        <taxon>Orthornavirae</taxon>
        <taxon>Kitrinoviricota</taxon>
        <taxon>Alsuviricetes</taxon>
        <taxon>Martellivirales</taxon>
        <taxon>Virgaviridae</taxon>
        <taxon>Tobravirus</taxon>
        <taxon>Tobacco rattle virus</taxon>
    </lineage>
</organism>
<sequence length="1707" mass="194330">MANGNFKLSQLLNVDEMSAEQRSHFFDLMLTKPDCEIGQMMQRVVVDKVDDMIRERKTKDPVIVHEVLSQKEQNKLMEIYPEFNIVFKDDKNMVHGFAAAERKLQALLLLDRVPALQEVDDIGGQWSFWVTRGEKRIHSCCPNLDIRDDQREISRQIFLTAIGDQARSGKRQMSENELWMYDQFRKNIAAPNAVRCNNTYQGCTCRGFSDGKKKGAQYAIALHSLYDFKLKDLMATMVEKKTKVVHAAMLFAPESMLVDEGPLPSVDGYYMKKNGKIYFGFEKDPSFSYIHDWEEYKKYLLGKPVSYQGNVFYFEPWQVRGDTMLFSIYRIAGVPRRSLSSQEYYRRIYISRWENMVVVPIFDLVESTRELVKKDLFVEKQFMDKCLDYIARLSDQQLTISNVKSYLSSNNWVLFINGAAVKNKQSVDSRDLQLLAQTLLVKEQVARPVMRELREAILTETKPITSLTDVLGLISRKLWKQFANKIAVGGFVGMVGTLIGFYPKKVLTWAKDTPNGPELCYENSHKTKVIVFLSVVYAIGGITLMRRDIRDGLVKKLCDMFDIKRGAHVLDVENPCRYYEINDFFSSLYSASESGETVLPDLSEVKAKSDKLLQQKKEIADEFLSAKFSNYSGSSVRTSPPSVVGSSRSGLGLLLEDSNVLTQARVGVSRKVDDEEIMEQFLSGLIDTEAEIDEVVSAFSAECERGETSGTKVLCKPLTPPGFENVLPAVKPLVSKGKTVKRVDYFQVMGGERLPKRPVVSGDNSVDARREFLYYLDAERVAQNDEIMSLYRDYSRGVIRTGGQNYPHGLGVWDVEMKNWCIRPVVTEHAYVFQPDKRMDDWSGYLEVAVWERGMLVNDFAVERMSDYVIVCDQTYLCNNRLILDNLSALDLGPVNCSFELVDGVPGCGKSTMIVNSANPCVDVVLSTGRAATDDLIERFASKGFPCKLKRRVKTVDSFLMHCVDGSLTGDVLHFDEALMAHAGMVYFCAQIAGAKRCICQGDQNQISFKPRVSQVDLRFSSLVGKFDIVTEKRETYRSPADVAAVLNKYYTGDVRTHNATANSMTVRKIVSKEQVSLKPGAQYITFLQSEKKELVNLLALRKVAAKVSTVHESQGETFKDVVLVRTKPTDDSIARGREYLIVALSRHTQSLVYETVKEDDVSKEIRESAALTKAALARFFVTETVLXRFRSRFDVFRHHEGPCAVPDSGTITDLEMWYDALFPGNSLRDSSLDGYLVATTDCNLRLDNVTIKSGNWKDKFAEKETFLKPVIRTAMPDKRKTTQLESLLALQKRNQAAPDLQENVHATVLIEETMKKLKSVVYDVGKIRADPIVNRAQMERWWRNQSTAVQAKVVADVRELHEIDYSSYMYMIKSDVKPKTDLTPQFEYSALQTVVYHEKLINSLFGPIFKEINERKLDAMQPHFVFNTRMTSSDLNDRVKFLNTEAAYDFVEIDMSKFDKSANRFHLQLQLEIYRLFGLDEWAAFLWEVSHTQTTVRDIQNGMMAHIWYQQKSGDADTYNANSDRTLCALLSELPLEKAVMVTYGGDDSLIAFPRGTQFVDPCPKLATKWNFECKIFKYDVPMFCGKFLLKTSSCYEFVPDPVKVLTKLGKKSIKDVQHLAEIYISLNDSNRALGNYMVVSKLSESVSDRYLYKGDSVHALCALWKHIKSFTALCTLFRDENDKELNPAKVDWKKAQRAVSNFYDW</sequence>
<feature type="chain" id="PRO_0000040215" description="Replicase large subunit">
    <location>
        <begin position="1"/>
        <end position="1707"/>
    </location>
</feature>
<feature type="chain" id="PRO_0000040216" description="Replicase small subunit" evidence="1">
    <location>
        <begin position="1"/>
        <end position="1187"/>
    </location>
</feature>
<feature type="domain" description="Alphavirus-like MT" evidence="4">
    <location>
        <begin position="86"/>
        <end position="300"/>
    </location>
</feature>
<feature type="domain" description="(+)RNA virus helicase ATP-binding">
    <location>
        <begin position="872"/>
        <end position="1033"/>
    </location>
</feature>
<feature type="domain" description="(+)RNA virus helicase C-terminal">
    <location>
        <begin position="1034"/>
        <end position="1187"/>
    </location>
</feature>
<feature type="domain" description="RdRp catalytic" evidence="3">
    <location>
        <begin position="1449"/>
        <end position="1562"/>
    </location>
</feature>
<feature type="region of interest" description="Methyltransferase" evidence="1">
    <location>
        <begin position="65"/>
        <end position="425"/>
    </location>
</feature>
<feature type="region of interest" description="Helicase" evidence="1">
    <location>
        <begin position="901"/>
        <end position="1155"/>
    </location>
</feature>
<feature type="coiled-coil region" evidence="2">
    <location>
        <begin position="601"/>
        <end position="622"/>
    </location>
</feature>
<comment type="function">
    <molecule>Replicase large subunit</molecule>
    <text evidence="1">Is an RNA-dependent RNA polymerase active in viral RNA replication.</text>
</comment>
<comment type="function">
    <molecule>Replicase small subunit</molecule>
    <text evidence="5">Is a methyltransferase active in RNA capping and an RNA helicase. Methyltransferase displays a cytoplasmic capping enzyme activity. This function is necessary since all viral RNAs are synthesized in the cytoplasm, and host capping enzymes are restricted to the nucleus. Helicase region probably exhibits NTPase and RNA unwinding activities (Potential).</text>
</comment>
<comment type="catalytic activity">
    <reaction>
        <text>ATP + H2O = ADP + phosphate + H(+)</text>
        <dbReference type="Rhea" id="RHEA:13065"/>
        <dbReference type="ChEBI" id="CHEBI:15377"/>
        <dbReference type="ChEBI" id="CHEBI:15378"/>
        <dbReference type="ChEBI" id="CHEBI:30616"/>
        <dbReference type="ChEBI" id="CHEBI:43474"/>
        <dbReference type="ChEBI" id="CHEBI:456216"/>
        <dbReference type="EC" id="3.6.4.13"/>
    </reaction>
</comment>
<comment type="catalytic activity">
    <reaction evidence="3">
        <text>RNA(n) + a ribonucleoside 5'-triphosphate = RNA(n+1) + diphosphate</text>
        <dbReference type="Rhea" id="RHEA:21248"/>
        <dbReference type="Rhea" id="RHEA-COMP:14527"/>
        <dbReference type="Rhea" id="RHEA-COMP:17342"/>
        <dbReference type="ChEBI" id="CHEBI:33019"/>
        <dbReference type="ChEBI" id="CHEBI:61557"/>
        <dbReference type="ChEBI" id="CHEBI:140395"/>
        <dbReference type="EC" id="2.7.7.48"/>
    </reaction>
</comment>
<comment type="subunit">
    <text evidence="1">Heterodimer of a large and a small subunit.</text>
</comment>
<comment type="miscellaneous">
    <text>The replicase large subunit is translated as a fusion protein by episodic readthrough of a termination codon. When readthrough of the terminator codon TGA occurs between the codons for 1187-Lys and 1189-Arg, this results in the addition of the RdRp region.</text>
</comment>
<comment type="similarity">
    <text evidence="5">Belongs to the ssRNA positive-strand viruses RNA-directed RNA polymerase family.</text>
</comment>